<evidence type="ECO:0000255" key="1">
    <source>
        <dbReference type="HAMAP-Rule" id="MF_01367"/>
    </source>
</evidence>
<evidence type="ECO:0000305" key="2"/>
<keyword id="KW-0687">Ribonucleoprotein</keyword>
<keyword id="KW-0689">Ribosomal protein</keyword>
<keyword id="KW-0694">RNA-binding</keyword>
<keyword id="KW-0699">rRNA-binding</keyword>
<organism>
    <name type="scientific">Borrelia hermsii (strain HS1 / DAH)</name>
    <dbReference type="NCBI Taxonomy" id="314723"/>
    <lineage>
        <taxon>Bacteria</taxon>
        <taxon>Pseudomonadati</taxon>
        <taxon>Spirochaetota</taxon>
        <taxon>Spirochaetia</taxon>
        <taxon>Spirochaetales</taxon>
        <taxon>Borreliaceae</taxon>
        <taxon>Borrelia</taxon>
    </lineage>
</organism>
<accession>B2S0J1</accession>
<dbReference type="EMBL" id="CP000048">
    <property type="protein sequence ID" value="AAX16997.1"/>
    <property type="status" value="ALT_INIT"/>
    <property type="molecule type" value="Genomic_DNA"/>
</dbReference>
<dbReference type="RefSeq" id="WP_025406557.1">
    <property type="nucleotide sequence ID" value="NZ_CP073136.1"/>
</dbReference>
<dbReference type="SMR" id="B2S0J1"/>
<dbReference type="GeneID" id="71843306"/>
<dbReference type="KEGG" id="bhr:BH0488"/>
<dbReference type="HOGENOM" id="CLU_095071_2_1_12"/>
<dbReference type="Proteomes" id="UP000008834">
    <property type="component" value="Chromosome"/>
</dbReference>
<dbReference type="GO" id="GO:0022625">
    <property type="term" value="C:cytosolic large ribosomal subunit"/>
    <property type="evidence" value="ECO:0007669"/>
    <property type="project" value="TreeGrafter"/>
</dbReference>
<dbReference type="GO" id="GO:0070180">
    <property type="term" value="F:large ribosomal subunit rRNA binding"/>
    <property type="evidence" value="ECO:0007669"/>
    <property type="project" value="TreeGrafter"/>
</dbReference>
<dbReference type="GO" id="GO:0003735">
    <property type="term" value="F:structural constituent of ribosome"/>
    <property type="evidence" value="ECO:0007669"/>
    <property type="project" value="InterPro"/>
</dbReference>
<dbReference type="GO" id="GO:0006412">
    <property type="term" value="P:translation"/>
    <property type="evidence" value="ECO:0007669"/>
    <property type="project" value="UniProtKB-UniRule"/>
</dbReference>
<dbReference type="CDD" id="cd00337">
    <property type="entry name" value="Ribosomal_uL14"/>
    <property type="match status" value="1"/>
</dbReference>
<dbReference type="FunFam" id="2.40.150.20:FF:000001">
    <property type="entry name" value="50S ribosomal protein L14"/>
    <property type="match status" value="1"/>
</dbReference>
<dbReference type="Gene3D" id="2.40.150.20">
    <property type="entry name" value="Ribosomal protein L14"/>
    <property type="match status" value="1"/>
</dbReference>
<dbReference type="HAMAP" id="MF_01367">
    <property type="entry name" value="Ribosomal_uL14"/>
    <property type="match status" value="1"/>
</dbReference>
<dbReference type="InterPro" id="IPR000218">
    <property type="entry name" value="Ribosomal_uL14"/>
</dbReference>
<dbReference type="InterPro" id="IPR005745">
    <property type="entry name" value="Ribosomal_uL14_bac-type"/>
</dbReference>
<dbReference type="InterPro" id="IPR019972">
    <property type="entry name" value="Ribosomal_uL14_CS"/>
</dbReference>
<dbReference type="InterPro" id="IPR036853">
    <property type="entry name" value="Ribosomal_uL14_sf"/>
</dbReference>
<dbReference type="NCBIfam" id="TIGR01067">
    <property type="entry name" value="rplN_bact"/>
    <property type="match status" value="1"/>
</dbReference>
<dbReference type="PANTHER" id="PTHR11761">
    <property type="entry name" value="50S/60S RIBOSOMAL PROTEIN L14/L23"/>
    <property type="match status" value="1"/>
</dbReference>
<dbReference type="PANTHER" id="PTHR11761:SF3">
    <property type="entry name" value="LARGE RIBOSOMAL SUBUNIT PROTEIN UL14M"/>
    <property type="match status" value="1"/>
</dbReference>
<dbReference type="Pfam" id="PF00238">
    <property type="entry name" value="Ribosomal_L14"/>
    <property type="match status" value="1"/>
</dbReference>
<dbReference type="SMART" id="SM01374">
    <property type="entry name" value="Ribosomal_L14"/>
    <property type="match status" value="1"/>
</dbReference>
<dbReference type="SUPFAM" id="SSF50193">
    <property type="entry name" value="Ribosomal protein L14"/>
    <property type="match status" value="1"/>
</dbReference>
<dbReference type="PROSITE" id="PS00049">
    <property type="entry name" value="RIBOSOMAL_L14"/>
    <property type="match status" value="1"/>
</dbReference>
<name>RL14_BORHD</name>
<sequence>MVQIQTYLTVADNTGGKIAQCIKVLGGSKKRYARVGDIIVVAVKQAIPNSPVKKGDVHKAVVVRTSKEIRRKNGTYVRFDDNACVILDANLNPRGKRVFGPVARELRDANFMKVVSLASEVI</sequence>
<reference key="1">
    <citation type="submission" date="2004-12" db="EMBL/GenBank/DDBJ databases">
        <title>The genome sequence of Borrelia hermsii and Borrelia turicatae: comparative analysis of two agents of endemic N. America relapsing fever.</title>
        <authorList>
            <person name="Porcella S.F."/>
            <person name="Raffel S.J."/>
            <person name="Schrumpf M.E."/>
            <person name="Montgomery B."/>
            <person name="Smith T."/>
            <person name="Schwan T.G."/>
        </authorList>
    </citation>
    <scope>NUCLEOTIDE SEQUENCE [LARGE SCALE GENOMIC DNA]</scope>
    <source>
        <strain>HS1 / DAH</strain>
    </source>
</reference>
<gene>
    <name evidence="1" type="primary">rplN</name>
    <name type="ordered locus">BH0488</name>
</gene>
<feature type="chain" id="PRO_0000355808" description="Large ribosomal subunit protein uL14">
    <location>
        <begin position="1"/>
        <end position="122"/>
    </location>
</feature>
<protein>
    <recommendedName>
        <fullName evidence="1">Large ribosomal subunit protein uL14</fullName>
    </recommendedName>
    <alternativeName>
        <fullName evidence="2">50S ribosomal protein L14</fullName>
    </alternativeName>
</protein>
<comment type="function">
    <text evidence="1">Binds to 23S rRNA. Forms part of two intersubunit bridges in the 70S ribosome.</text>
</comment>
<comment type="subunit">
    <text evidence="1">Part of the 50S ribosomal subunit. Forms a cluster with proteins L3 and L19. In the 70S ribosome, L14 and L19 interact and together make contacts with the 16S rRNA in bridges B5 and B8.</text>
</comment>
<comment type="similarity">
    <text evidence="1">Belongs to the universal ribosomal protein uL14 family.</text>
</comment>
<comment type="sequence caution" evidence="2">
    <conflict type="erroneous initiation">
        <sequence resource="EMBL-CDS" id="AAX16997"/>
    </conflict>
</comment>
<proteinExistence type="inferred from homology"/>